<reference key="1">
    <citation type="journal article" date="2009" name="J. Bacteriol.">
        <title>Complete genome sequence of Haemophilus parasuis SH0165.</title>
        <authorList>
            <person name="Yue M."/>
            <person name="Yang F."/>
            <person name="Yang J."/>
            <person name="Bei W."/>
            <person name="Cai X."/>
            <person name="Chen L."/>
            <person name="Dong J."/>
            <person name="Zhou R."/>
            <person name="Jin M."/>
            <person name="Jin Q."/>
            <person name="Chen H."/>
        </authorList>
    </citation>
    <scope>NUCLEOTIDE SEQUENCE [LARGE SCALE GENOMIC DNA]</scope>
    <source>
        <strain>SH0165</strain>
    </source>
</reference>
<protein>
    <recommendedName>
        <fullName evidence="1">Sec-independent protein translocase protein TatA</fullName>
    </recommendedName>
</protein>
<gene>
    <name evidence="1" type="primary">tatA</name>
    <name type="ordered locus">HAPS_1393</name>
</gene>
<proteinExistence type="inferred from homology"/>
<comment type="function">
    <text evidence="1">Part of the twin-arginine translocation (Tat) system that transports large folded proteins containing a characteristic twin-arginine motif in their signal peptide across membranes. TatA could form the protein-conducting channel of the Tat system.</text>
</comment>
<comment type="subunit">
    <text evidence="1">The Tat system comprises two distinct complexes: a TatABC complex, containing multiple copies of TatA, TatB and TatC subunits, and a separate TatA complex, containing only TatA subunits. Substrates initially bind to the TatABC complex, which probably triggers association of the separate TatA complex to form the active translocon.</text>
</comment>
<comment type="subcellular location">
    <subcellularLocation>
        <location evidence="1">Cell inner membrane</location>
        <topology evidence="1">Single-pass membrane protein</topology>
    </subcellularLocation>
</comment>
<comment type="similarity">
    <text evidence="1">Belongs to the TatA/E family.</text>
</comment>
<sequence>MGGISIWNLVIIVLLVVLLFGTKKLRGLGSDLGESIKGFKKAMNDDKAKDAEFEKVEQKTAESTEQKAKEKEQA</sequence>
<name>TATA_GLAP5</name>
<evidence type="ECO:0000255" key="1">
    <source>
        <dbReference type="HAMAP-Rule" id="MF_00236"/>
    </source>
</evidence>
<evidence type="ECO:0000256" key="2">
    <source>
        <dbReference type="SAM" id="MobiDB-lite"/>
    </source>
</evidence>
<accession>B8F6M1</accession>
<dbReference type="EMBL" id="CP001321">
    <property type="protein sequence ID" value="ACL32973.1"/>
    <property type="molecule type" value="Genomic_DNA"/>
</dbReference>
<dbReference type="RefSeq" id="WP_010787115.1">
    <property type="nucleotide sequence ID" value="NC_011852.1"/>
</dbReference>
<dbReference type="SMR" id="B8F6M1"/>
<dbReference type="STRING" id="557723.HAPS_1393"/>
<dbReference type="GeneID" id="66619354"/>
<dbReference type="KEGG" id="hap:HAPS_1393"/>
<dbReference type="HOGENOM" id="CLU_086034_5_1_6"/>
<dbReference type="Proteomes" id="UP000006743">
    <property type="component" value="Chromosome"/>
</dbReference>
<dbReference type="GO" id="GO:0033281">
    <property type="term" value="C:TAT protein transport complex"/>
    <property type="evidence" value="ECO:0007669"/>
    <property type="project" value="UniProtKB-UniRule"/>
</dbReference>
<dbReference type="GO" id="GO:0008320">
    <property type="term" value="F:protein transmembrane transporter activity"/>
    <property type="evidence" value="ECO:0007669"/>
    <property type="project" value="UniProtKB-UniRule"/>
</dbReference>
<dbReference type="GO" id="GO:0043953">
    <property type="term" value="P:protein transport by the Tat complex"/>
    <property type="evidence" value="ECO:0007669"/>
    <property type="project" value="UniProtKB-UniRule"/>
</dbReference>
<dbReference type="Gene3D" id="1.20.5.3310">
    <property type="match status" value="1"/>
</dbReference>
<dbReference type="HAMAP" id="MF_00236">
    <property type="entry name" value="TatA_E"/>
    <property type="match status" value="1"/>
</dbReference>
<dbReference type="InterPro" id="IPR003369">
    <property type="entry name" value="TatA/B/E"/>
</dbReference>
<dbReference type="InterPro" id="IPR006312">
    <property type="entry name" value="TatA/E"/>
</dbReference>
<dbReference type="NCBIfam" id="NF002500">
    <property type="entry name" value="PRK01833.1"/>
    <property type="match status" value="1"/>
</dbReference>
<dbReference type="NCBIfam" id="TIGR01411">
    <property type="entry name" value="tatAE"/>
    <property type="match status" value="1"/>
</dbReference>
<dbReference type="PANTHER" id="PTHR42982">
    <property type="entry name" value="SEC-INDEPENDENT PROTEIN TRANSLOCASE PROTEIN TATA"/>
    <property type="match status" value="1"/>
</dbReference>
<dbReference type="PANTHER" id="PTHR42982:SF1">
    <property type="entry name" value="SEC-INDEPENDENT PROTEIN TRANSLOCASE PROTEIN TATA"/>
    <property type="match status" value="1"/>
</dbReference>
<dbReference type="Pfam" id="PF02416">
    <property type="entry name" value="TatA_B_E"/>
    <property type="match status" value="1"/>
</dbReference>
<feature type="chain" id="PRO_1000197871" description="Sec-independent protein translocase protein TatA">
    <location>
        <begin position="1"/>
        <end position="74"/>
    </location>
</feature>
<feature type="transmembrane region" description="Helical" evidence="1">
    <location>
        <begin position="1"/>
        <end position="21"/>
    </location>
</feature>
<feature type="region of interest" description="Disordered" evidence="2">
    <location>
        <begin position="51"/>
        <end position="74"/>
    </location>
</feature>
<keyword id="KW-0997">Cell inner membrane</keyword>
<keyword id="KW-1003">Cell membrane</keyword>
<keyword id="KW-0472">Membrane</keyword>
<keyword id="KW-0653">Protein transport</keyword>
<keyword id="KW-1185">Reference proteome</keyword>
<keyword id="KW-0811">Translocation</keyword>
<keyword id="KW-0812">Transmembrane</keyword>
<keyword id="KW-1133">Transmembrane helix</keyword>
<keyword id="KW-0813">Transport</keyword>
<organism>
    <name type="scientific">Glaesserella parasuis serovar 5 (strain SH0165)</name>
    <name type="common">Haemophilus parasuis</name>
    <dbReference type="NCBI Taxonomy" id="557723"/>
    <lineage>
        <taxon>Bacteria</taxon>
        <taxon>Pseudomonadati</taxon>
        <taxon>Pseudomonadota</taxon>
        <taxon>Gammaproteobacteria</taxon>
        <taxon>Pasteurellales</taxon>
        <taxon>Pasteurellaceae</taxon>
        <taxon>Glaesserella</taxon>
    </lineage>
</organism>